<sequence>MLDNVLRIATRQSPLALWQAHYVKDKLMASHPGLVVELVPMVTRGDVILDTPLAKVGGKGLFVKELEVALLENRADIAVHSMKDVPVEFPQGLGLVTICEREDPRDAFVSNNYDSLDALPAGSIVGTSSLRRQCQLAERRPDLIIRSLRGNVGTRLSKLDNGEYDAIILAVAGLKRLGLESRIRAALPPEISLPAVGQGAVGIECRLDDTRTRELLAALNHHETALRVTAERAMNTRLEGGCQVPIGSYAELIDGEIWLRALVGAPDGSQIIRGERRGAPQNAEQMGISLAEELLNNGAREILAEVYNGDAPA</sequence>
<reference key="1">
    <citation type="journal article" date="2009" name="PLoS Genet.">
        <title>Organised genome dynamics in the Escherichia coli species results in highly diverse adaptive paths.</title>
        <authorList>
            <person name="Touchon M."/>
            <person name="Hoede C."/>
            <person name="Tenaillon O."/>
            <person name="Barbe V."/>
            <person name="Baeriswyl S."/>
            <person name="Bidet P."/>
            <person name="Bingen E."/>
            <person name="Bonacorsi S."/>
            <person name="Bouchier C."/>
            <person name="Bouvet O."/>
            <person name="Calteau A."/>
            <person name="Chiapello H."/>
            <person name="Clermont O."/>
            <person name="Cruveiller S."/>
            <person name="Danchin A."/>
            <person name="Diard M."/>
            <person name="Dossat C."/>
            <person name="Karoui M.E."/>
            <person name="Frapy E."/>
            <person name="Garry L."/>
            <person name="Ghigo J.M."/>
            <person name="Gilles A.M."/>
            <person name="Johnson J."/>
            <person name="Le Bouguenec C."/>
            <person name="Lescat M."/>
            <person name="Mangenot S."/>
            <person name="Martinez-Jehanne V."/>
            <person name="Matic I."/>
            <person name="Nassif X."/>
            <person name="Oztas S."/>
            <person name="Petit M.A."/>
            <person name="Pichon C."/>
            <person name="Rouy Z."/>
            <person name="Ruf C.S."/>
            <person name="Schneider D."/>
            <person name="Tourret J."/>
            <person name="Vacherie B."/>
            <person name="Vallenet D."/>
            <person name="Medigue C."/>
            <person name="Rocha E.P.C."/>
            <person name="Denamur E."/>
        </authorList>
    </citation>
    <scope>NUCLEOTIDE SEQUENCE [LARGE SCALE GENOMIC DNA]</scope>
    <source>
        <strain>55989 / EAEC</strain>
    </source>
</reference>
<comment type="function">
    <text evidence="1">Tetrapolymerization of the monopyrrole PBG into the hydroxymethylbilane pre-uroporphyrinogen in several discrete steps.</text>
</comment>
<comment type="catalytic activity">
    <reaction evidence="1">
        <text>4 porphobilinogen + H2O = hydroxymethylbilane + 4 NH4(+)</text>
        <dbReference type="Rhea" id="RHEA:13185"/>
        <dbReference type="ChEBI" id="CHEBI:15377"/>
        <dbReference type="ChEBI" id="CHEBI:28938"/>
        <dbReference type="ChEBI" id="CHEBI:57845"/>
        <dbReference type="ChEBI" id="CHEBI:58126"/>
        <dbReference type="EC" id="2.5.1.61"/>
    </reaction>
</comment>
<comment type="cofactor">
    <cofactor evidence="1">
        <name>dipyrromethane</name>
        <dbReference type="ChEBI" id="CHEBI:60342"/>
    </cofactor>
    <text evidence="1">Binds 1 dipyrromethane group covalently.</text>
</comment>
<comment type="pathway">
    <text evidence="1">Porphyrin-containing compound metabolism; protoporphyrin-IX biosynthesis; coproporphyrinogen-III from 5-aminolevulinate: step 2/4.</text>
</comment>
<comment type="subunit">
    <text evidence="1">Monomer.</text>
</comment>
<comment type="miscellaneous">
    <text evidence="1">The porphobilinogen subunits are added to the dipyrromethane group.</text>
</comment>
<comment type="similarity">
    <text evidence="1">Belongs to the HMBS family.</text>
</comment>
<name>HEM3_ECO55</name>
<dbReference type="EC" id="2.5.1.61" evidence="1"/>
<dbReference type="EMBL" id="CU928145">
    <property type="protein sequence ID" value="CAV00923.1"/>
    <property type="molecule type" value="Genomic_DNA"/>
</dbReference>
<dbReference type="RefSeq" id="WP_001307481.1">
    <property type="nucleotide sequence ID" value="NC_011748.1"/>
</dbReference>
<dbReference type="SMR" id="B7L959"/>
<dbReference type="GeneID" id="75204795"/>
<dbReference type="KEGG" id="eck:EC55989_4275"/>
<dbReference type="HOGENOM" id="CLU_019704_0_2_6"/>
<dbReference type="UniPathway" id="UPA00251">
    <property type="reaction ID" value="UER00319"/>
</dbReference>
<dbReference type="Proteomes" id="UP000000746">
    <property type="component" value="Chromosome"/>
</dbReference>
<dbReference type="GO" id="GO:0005737">
    <property type="term" value="C:cytoplasm"/>
    <property type="evidence" value="ECO:0007669"/>
    <property type="project" value="TreeGrafter"/>
</dbReference>
<dbReference type="GO" id="GO:0004418">
    <property type="term" value="F:hydroxymethylbilane synthase activity"/>
    <property type="evidence" value="ECO:0007669"/>
    <property type="project" value="UniProtKB-UniRule"/>
</dbReference>
<dbReference type="GO" id="GO:0006782">
    <property type="term" value="P:protoporphyrinogen IX biosynthetic process"/>
    <property type="evidence" value="ECO:0007669"/>
    <property type="project" value="UniProtKB-UniRule"/>
</dbReference>
<dbReference type="CDD" id="cd13646">
    <property type="entry name" value="PBP2_EcHMBS_like"/>
    <property type="match status" value="1"/>
</dbReference>
<dbReference type="FunFam" id="3.30.160.40:FF:000002">
    <property type="entry name" value="Porphobilinogen deaminase"/>
    <property type="match status" value="1"/>
</dbReference>
<dbReference type="FunFam" id="3.40.190.10:FF:000004">
    <property type="entry name" value="Porphobilinogen deaminase"/>
    <property type="match status" value="1"/>
</dbReference>
<dbReference type="FunFam" id="3.40.190.10:FF:000005">
    <property type="entry name" value="Porphobilinogen deaminase"/>
    <property type="match status" value="1"/>
</dbReference>
<dbReference type="Gene3D" id="3.40.190.10">
    <property type="entry name" value="Periplasmic binding protein-like II"/>
    <property type="match status" value="2"/>
</dbReference>
<dbReference type="Gene3D" id="3.30.160.40">
    <property type="entry name" value="Porphobilinogen deaminase, C-terminal domain"/>
    <property type="match status" value="1"/>
</dbReference>
<dbReference type="HAMAP" id="MF_00260">
    <property type="entry name" value="Porphobil_deam"/>
    <property type="match status" value="1"/>
</dbReference>
<dbReference type="InterPro" id="IPR000860">
    <property type="entry name" value="HemC"/>
</dbReference>
<dbReference type="InterPro" id="IPR022419">
    <property type="entry name" value="Porphobilin_deaminase_cofac_BS"/>
</dbReference>
<dbReference type="InterPro" id="IPR022417">
    <property type="entry name" value="Porphobilin_deaminase_N"/>
</dbReference>
<dbReference type="InterPro" id="IPR022418">
    <property type="entry name" value="Porphobilinogen_deaminase_C"/>
</dbReference>
<dbReference type="InterPro" id="IPR036803">
    <property type="entry name" value="Porphobilinogen_deaminase_C_sf"/>
</dbReference>
<dbReference type="NCBIfam" id="TIGR00212">
    <property type="entry name" value="hemC"/>
    <property type="match status" value="1"/>
</dbReference>
<dbReference type="PANTHER" id="PTHR11557">
    <property type="entry name" value="PORPHOBILINOGEN DEAMINASE"/>
    <property type="match status" value="1"/>
</dbReference>
<dbReference type="PANTHER" id="PTHR11557:SF0">
    <property type="entry name" value="PORPHOBILINOGEN DEAMINASE"/>
    <property type="match status" value="1"/>
</dbReference>
<dbReference type="Pfam" id="PF01379">
    <property type="entry name" value="Porphobil_deam"/>
    <property type="match status" value="1"/>
</dbReference>
<dbReference type="Pfam" id="PF03900">
    <property type="entry name" value="Porphobil_deamC"/>
    <property type="match status" value="1"/>
</dbReference>
<dbReference type="PIRSF" id="PIRSF001438">
    <property type="entry name" value="4pyrrol_synth_OHMeBilane_synth"/>
    <property type="match status" value="1"/>
</dbReference>
<dbReference type="PRINTS" id="PR00151">
    <property type="entry name" value="PORPHBDMNASE"/>
</dbReference>
<dbReference type="SUPFAM" id="SSF53850">
    <property type="entry name" value="Periplasmic binding protein-like II"/>
    <property type="match status" value="1"/>
</dbReference>
<dbReference type="SUPFAM" id="SSF54782">
    <property type="entry name" value="Porphobilinogen deaminase (hydroxymethylbilane synthase), C-terminal domain"/>
    <property type="match status" value="1"/>
</dbReference>
<dbReference type="PROSITE" id="PS00533">
    <property type="entry name" value="PORPHOBILINOGEN_DEAM"/>
    <property type="match status" value="1"/>
</dbReference>
<keyword id="KW-0627">Porphyrin biosynthesis</keyword>
<keyword id="KW-1185">Reference proteome</keyword>
<keyword id="KW-0808">Transferase</keyword>
<organism>
    <name type="scientific">Escherichia coli (strain 55989 / EAEC)</name>
    <dbReference type="NCBI Taxonomy" id="585055"/>
    <lineage>
        <taxon>Bacteria</taxon>
        <taxon>Pseudomonadati</taxon>
        <taxon>Pseudomonadota</taxon>
        <taxon>Gammaproteobacteria</taxon>
        <taxon>Enterobacterales</taxon>
        <taxon>Enterobacteriaceae</taxon>
        <taxon>Escherichia</taxon>
    </lineage>
</organism>
<gene>
    <name evidence="1" type="primary">hemC</name>
    <name type="ordered locus">EC55989_4275</name>
</gene>
<protein>
    <recommendedName>
        <fullName evidence="1">Porphobilinogen deaminase</fullName>
        <shortName evidence="1">PBG</shortName>
        <ecNumber evidence="1">2.5.1.61</ecNumber>
    </recommendedName>
    <alternativeName>
        <fullName evidence="1">Hydroxymethylbilane synthase</fullName>
        <shortName evidence="1">HMBS</shortName>
    </alternativeName>
    <alternativeName>
        <fullName evidence="1">Pre-uroporphyrinogen synthase</fullName>
    </alternativeName>
</protein>
<feature type="chain" id="PRO_1000125669" description="Porphobilinogen deaminase">
    <location>
        <begin position="1"/>
        <end position="313"/>
    </location>
</feature>
<feature type="modified residue" description="S-(dipyrrolylmethanemethyl)cysteine" evidence="1">
    <location>
        <position position="242"/>
    </location>
</feature>
<accession>B7L959</accession>
<evidence type="ECO:0000255" key="1">
    <source>
        <dbReference type="HAMAP-Rule" id="MF_00260"/>
    </source>
</evidence>
<proteinExistence type="inferred from homology"/>